<accession>P15823</accession>
<accession>Q63215</accession>
<protein>
    <recommendedName>
        <fullName>Alpha-1B adrenergic receptor</fullName>
    </recommendedName>
    <alternativeName>
        <fullName>Alpha-1B adrenoreceptor</fullName>
        <shortName>Alpha-1B adrenoceptor</shortName>
    </alternativeName>
</protein>
<feature type="chain" id="PRO_0000069072" description="Alpha-1B adrenergic receptor">
    <location>
        <begin position="1"/>
        <end position="515"/>
    </location>
</feature>
<feature type="topological domain" description="Extracellular" evidence="1">
    <location>
        <begin position="1"/>
        <end position="45"/>
    </location>
</feature>
<feature type="transmembrane region" description="Helical; Name=1" evidence="1">
    <location>
        <begin position="46"/>
        <end position="70"/>
    </location>
</feature>
<feature type="topological domain" description="Cytoplasmic" evidence="1">
    <location>
        <begin position="71"/>
        <end position="83"/>
    </location>
</feature>
<feature type="transmembrane region" description="Helical; Name=2" evidence="1">
    <location>
        <begin position="84"/>
        <end position="105"/>
    </location>
</feature>
<feature type="topological domain" description="Extracellular" evidence="1">
    <location>
        <begin position="106"/>
        <end position="115"/>
    </location>
</feature>
<feature type="transmembrane region" description="Helical; Name=3" evidence="1">
    <location>
        <begin position="116"/>
        <end position="141"/>
    </location>
</feature>
<feature type="topological domain" description="Cytoplasmic" evidence="1">
    <location>
        <begin position="142"/>
        <end position="161"/>
    </location>
</feature>
<feature type="transmembrane region" description="Helical; Name=4" evidence="1">
    <location>
        <begin position="162"/>
        <end position="182"/>
    </location>
</feature>
<feature type="topological domain" description="Extracellular" evidence="1">
    <location>
        <begin position="183"/>
        <end position="201"/>
    </location>
</feature>
<feature type="transmembrane region" description="Helical; Name=5" evidence="1">
    <location>
        <begin position="202"/>
        <end position="224"/>
    </location>
</feature>
<feature type="topological domain" description="Cytoplasmic" evidence="1">
    <location>
        <begin position="225"/>
        <end position="295"/>
    </location>
</feature>
<feature type="transmembrane region" description="Helical; Name=6" evidence="1">
    <location>
        <begin position="296"/>
        <end position="319"/>
    </location>
</feature>
<feature type="topological domain" description="Extracellular" evidence="1">
    <location>
        <begin position="320"/>
        <end position="326"/>
    </location>
</feature>
<feature type="transmembrane region" description="Helical; Name=7" evidence="1">
    <location>
        <begin position="327"/>
        <end position="351"/>
    </location>
</feature>
<feature type="topological domain" description="Cytoplasmic" evidence="1">
    <location>
        <begin position="352"/>
        <end position="515"/>
    </location>
</feature>
<feature type="region of interest" description="Disordered" evidence="6">
    <location>
        <begin position="392"/>
        <end position="430"/>
    </location>
</feature>
<feature type="region of interest" description="Disordered" evidence="6">
    <location>
        <begin position="474"/>
        <end position="515"/>
    </location>
</feature>
<feature type="short sequence motif" description="Nuclear localization signal" evidence="1">
    <location>
        <begin position="368"/>
        <end position="378"/>
    </location>
</feature>
<feature type="compositionally biased region" description="Polar residues" evidence="6">
    <location>
        <begin position="410"/>
        <end position="424"/>
    </location>
</feature>
<feature type="compositionally biased region" description="Polar residues" evidence="6">
    <location>
        <begin position="484"/>
        <end position="498"/>
    </location>
</feature>
<feature type="modified residue" description="Phosphothreonine" evidence="3">
    <location>
        <position position="264"/>
    </location>
</feature>
<feature type="lipid moiety-binding region" description="S-palmitoyl cysteine" evidence="4">
    <location>
        <position position="365"/>
    </location>
</feature>
<feature type="glycosylation site" description="N-linked (GlcNAc...) asparagine" evidence="4">
    <location>
        <position position="10"/>
    </location>
</feature>
<feature type="glycosylation site" description="N-linked (GlcNAc...) asparagine" evidence="4">
    <location>
        <position position="24"/>
    </location>
</feature>
<feature type="glycosylation site" description="N-linked (GlcNAc...) asparagine" evidence="4">
    <location>
        <position position="34"/>
    </location>
</feature>
<feature type="disulfide bond" evidence="5">
    <location>
        <begin position="118"/>
        <end position="195"/>
    </location>
</feature>
<feature type="sequence conflict" description="In Ref. 2; AAA63478." evidence="7" ref="2">
    <original>GRI</original>
    <variation>LSF</variation>
    <location>
        <begin position="114"/>
        <end position="116"/>
    </location>
</feature>
<feature type="sequence conflict" description="In Ref. 1 and 4." evidence="7" ref="1 4">
    <original>Y</original>
    <variation>C</variation>
    <location>
        <position position="203"/>
    </location>
</feature>
<feature type="sequence conflict" description="In Ref. 1 and 4." evidence="7" ref="1 4">
    <original>S</original>
    <variation>C</variation>
    <location>
        <position position="207"/>
    </location>
</feature>
<feature type="sequence conflict" description="In Ref. 3; AAA40647." evidence="7" ref="3">
    <original>C</original>
    <variation>S</variation>
    <location>
        <position position="306"/>
    </location>
</feature>
<feature type="sequence conflict" description="In Ref. 1; CAA35934." evidence="7" ref="1">
    <original>TQ</original>
    <variation>QK</variation>
    <location>
        <begin position="415"/>
        <end position="416"/>
    </location>
</feature>
<feature type="sequence conflict" description="In Ref. 3; AAA40647." evidence="7" ref="3">
    <original>C</original>
    <variation>Y</variation>
    <location>
        <position position="440"/>
    </location>
</feature>
<feature type="sequence conflict" description="In Ref. 1; CAA35934." evidence="7" ref="1">
    <original>GDT</original>
    <variation>ATA</variation>
    <location>
        <begin position="484"/>
        <end position="486"/>
    </location>
</feature>
<feature type="sequence conflict" description="In Ref. 3; AAA40647." evidence="7" ref="3">
    <original>T</original>
    <variation>S</variation>
    <location>
        <position position="493"/>
    </location>
</feature>
<feature type="sequence conflict" description="In Ref. 1; CAA35934." evidence="7" ref="1">
    <original>A</original>
    <variation>G</variation>
    <location>
        <position position="511"/>
    </location>
</feature>
<organism>
    <name type="scientific">Rattus norvegicus</name>
    <name type="common">Rat</name>
    <dbReference type="NCBI Taxonomy" id="10116"/>
    <lineage>
        <taxon>Eukaryota</taxon>
        <taxon>Metazoa</taxon>
        <taxon>Chordata</taxon>
        <taxon>Craniata</taxon>
        <taxon>Vertebrata</taxon>
        <taxon>Euteleostomi</taxon>
        <taxon>Mammalia</taxon>
        <taxon>Eutheria</taxon>
        <taxon>Euarchontoglires</taxon>
        <taxon>Glires</taxon>
        <taxon>Rodentia</taxon>
        <taxon>Myomorpha</taxon>
        <taxon>Muroidea</taxon>
        <taxon>Muridae</taxon>
        <taxon>Murinae</taxon>
        <taxon>Rattus</taxon>
    </lineage>
</organism>
<proteinExistence type="evidence at transcript level"/>
<comment type="function">
    <text evidence="1">This alpha-adrenergic receptor mediates its action by association with G proteins that activate a phosphatidylinositol-calcium second messenger system. Its effect is mediated by G(q) and G(11) proteins. Nuclear ADRA1A-ADRA1B heterooligomers regulate phenylephrine (PE)-stimulated ERK signaling in cardiac myocytes (By similarity).</text>
</comment>
<comment type="subunit">
    <text evidence="2">Homo- and heterooligomer. Heterooligomerizes with ADRA1B homooligomers in cardiac myocytes. Interacts with CAVIN4.</text>
</comment>
<comment type="subcellular location">
    <subcellularLocation>
        <location evidence="1">Nucleus membrane</location>
        <topology evidence="1">Multi-pass membrane protein</topology>
    </subcellularLocation>
    <subcellularLocation>
        <location evidence="2">Cell membrane</location>
        <topology evidence="4">Multi-pass membrane protein</topology>
    </subcellularLocation>
    <subcellularLocation>
        <location evidence="2">Cytoplasm</location>
    </subcellularLocation>
    <subcellularLocation>
        <location evidence="2">Membrane</location>
        <location evidence="2">Caveola</location>
    </subcellularLocation>
    <text evidence="1">Location at the nuclear membrane facilitates heterooligomerization and regulates ERK-mediated signaling in cardiac myocytes. Colocalizes with GNAQ, PLCB1 as well as LAP2 at the nuclear membrane of cardiac myocytes (By similarity).</text>
</comment>
<comment type="similarity">
    <text evidence="5">Belongs to the G-protein coupled receptor 1 family. Adrenergic receptor subfamily. ADRA1B sub-subfamily.</text>
</comment>
<keyword id="KW-1003">Cell membrane</keyword>
<keyword id="KW-0963">Cytoplasm</keyword>
<keyword id="KW-1015">Disulfide bond</keyword>
<keyword id="KW-0297">G-protein coupled receptor</keyword>
<keyword id="KW-0325">Glycoprotein</keyword>
<keyword id="KW-0449">Lipoprotein</keyword>
<keyword id="KW-0472">Membrane</keyword>
<keyword id="KW-0539">Nucleus</keyword>
<keyword id="KW-0564">Palmitate</keyword>
<keyword id="KW-0597">Phosphoprotein</keyword>
<keyword id="KW-0675">Receptor</keyword>
<keyword id="KW-1185">Reference proteome</keyword>
<keyword id="KW-0807">Transducer</keyword>
<keyword id="KW-0812">Transmembrane</keyword>
<keyword id="KW-1133">Transmembrane helix</keyword>
<gene>
    <name type="primary">Adra1b</name>
</gene>
<name>ADA1B_RAT</name>
<dbReference type="EMBL" id="X51585">
    <property type="protein sequence ID" value="CAA35934.1"/>
    <property type="molecule type" value="mRNA"/>
</dbReference>
<dbReference type="EMBL" id="M60655">
    <property type="protein sequence ID" value="AAA63478.1"/>
    <property type="molecule type" value="mRNA"/>
</dbReference>
<dbReference type="EMBL" id="L08610">
    <property type="protein sequence ID" value="AAA40647.1"/>
    <property type="molecule type" value="Genomic_DNA"/>
</dbReference>
<dbReference type="EMBL" id="L08609">
    <property type="protein sequence ID" value="AAA40647.1"/>
    <property type="status" value="JOINED"/>
    <property type="molecule type" value="Genomic_DNA"/>
</dbReference>
<dbReference type="EMBL" id="D32045">
    <property type="protein sequence ID" value="BAA06806.1"/>
    <property type="molecule type" value="Genomic_DNA"/>
</dbReference>
<dbReference type="PIR" id="JC1525">
    <property type="entry name" value="JC1525"/>
</dbReference>
<dbReference type="SMR" id="P15823"/>
<dbReference type="CORUM" id="P15823"/>
<dbReference type="DIP" id="DIP-59867N"/>
<dbReference type="FunCoup" id="P15823">
    <property type="interactions" value="183"/>
</dbReference>
<dbReference type="IntAct" id="P15823">
    <property type="interactions" value="1"/>
</dbReference>
<dbReference type="STRING" id="10116.ENSRNOP00000073309"/>
<dbReference type="BindingDB" id="P15823"/>
<dbReference type="ChEMBL" id="CHEMBL315"/>
<dbReference type="DrugCentral" id="P15823"/>
<dbReference type="GuidetoPHARMACOLOGY" id="23"/>
<dbReference type="GlyCosmos" id="P15823">
    <property type="glycosylation" value="3 sites, No reported glycans"/>
</dbReference>
<dbReference type="GlyGen" id="P15823">
    <property type="glycosylation" value="3 sites"/>
</dbReference>
<dbReference type="iPTMnet" id="P15823"/>
<dbReference type="PhosphoSitePlus" id="P15823"/>
<dbReference type="SwissPalm" id="P15823"/>
<dbReference type="UCSC" id="RGD:2054">
    <property type="organism name" value="rat"/>
</dbReference>
<dbReference type="AGR" id="RGD:2054"/>
<dbReference type="RGD" id="2054">
    <property type="gene designation" value="Adra1b"/>
</dbReference>
<dbReference type="InParanoid" id="P15823"/>
<dbReference type="PhylomeDB" id="P15823"/>
<dbReference type="Reactome" id="R-RNO-390696">
    <property type="pathway name" value="Adrenoceptors"/>
</dbReference>
<dbReference type="Reactome" id="R-RNO-416476">
    <property type="pathway name" value="G alpha (q) signalling events"/>
</dbReference>
<dbReference type="Reactome" id="R-RNO-416482">
    <property type="pathway name" value="G alpha (12/13) signalling events"/>
</dbReference>
<dbReference type="PRO" id="PR:P15823"/>
<dbReference type="Proteomes" id="UP000002494">
    <property type="component" value="Unplaced"/>
</dbReference>
<dbReference type="GO" id="GO:0005901">
    <property type="term" value="C:caveola"/>
    <property type="evidence" value="ECO:0007669"/>
    <property type="project" value="UniProtKB-SubCell"/>
</dbReference>
<dbReference type="GO" id="GO:0005737">
    <property type="term" value="C:cytoplasm"/>
    <property type="evidence" value="ECO:0000250"/>
    <property type="project" value="UniProtKB"/>
</dbReference>
<dbReference type="GO" id="GO:0014704">
    <property type="term" value="C:intercalated disc"/>
    <property type="evidence" value="ECO:0000314"/>
    <property type="project" value="RGD"/>
</dbReference>
<dbReference type="GO" id="GO:0016020">
    <property type="term" value="C:membrane"/>
    <property type="evidence" value="ECO:0000266"/>
    <property type="project" value="RGD"/>
</dbReference>
<dbReference type="GO" id="GO:0031965">
    <property type="term" value="C:nuclear membrane"/>
    <property type="evidence" value="ECO:0000250"/>
    <property type="project" value="UniProtKB"/>
</dbReference>
<dbReference type="GO" id="GO:0005634">
    <property type="term" value="C:nucleus"/>
    <property type="evidence" value="ECO:0000250"/>
    <property type="project" value="UniProtKB"/>
</dbReference>
<dbReference type="GO" id="GO:0005886">
    <property type="term" value="C:plasma membrane"/>
    <property type="evidence" value="ECO:0000318"/>
    <property type="project" value="GO_Central"/>
</dbReference>
<dbReference type="GO" id="GO:0030315">
    <property type="term" value="C:T-tubule"/>
    <property type="evidence" value="ECO:0000314"/>
    <property type="project" value="RGD"/>
</dbReference>
<dbReference type="GO" id="GO:0004937">
    <property type="term" value="F:alpha1-adrenergic receptor activity"/>
    <property type="evidence" value="ECO:0000314"/>
    <property type="project" value="RGD"/>
</dbReference>
<dbReference type="GO" id="GO:0046982">
    <property type="term" value="F:protein heterodimerization activity"/>
    <property type="evidence" value="ECO:0000250"/>
    <property type="project" value="UniProtKB"/>
</dbReference>
<dbReference type="GO" id="GO:0071880">
    <property type="term" value="P:adenylate cyclase-activating adrenergic receptor signaling pathway"/>
    <property type="evidence" value="ECO:0000318"/>
    <property type="project" value="GO_Central"/>
</dbReference>
<dbReference type="GO" id="GO:0007512">
    <property type="term" value="P:adult heart development"/>
    <property type="evidence" value="ECO:0000266"/>
    <property type="project" value="RGD"/>
</dbReference>
<dbReference type="GO" id="GO:0048148">
    <property type="term" value="P:behavioral response to cocaine"/>
    <property type="evidence" value="ECO:0000266"/>
    <property type="project" value="RGD"/>
</dbReference>
<dbReference type="GO" id="GO:0001974">
    <property type="term" value="P:blood vessel remodeling"/>
    <property type="evidence" value="ECO:0000266"/>
    <property type="project" value="RGD"/>
</dbReference>
<dbReference type="GO" id="GO:0061049">
    <property type="term" value="P:cell growth involved in cardiac muscle cell development"/>
    <property type="evidence" value="ECO:0000266"/>
    <property type="project" value="RGD"/>
</dbReference>
<dbReference type="GO" id="GO:0007267">
    <property type="term" value="P:cell-cell signaling"/>
    <property type="evidence" value="ECO:0000318"/>
    <property type="project" value="GO_Central"/>
</dbReference>
<dbReference type="GO" id="GO:0042593">
    <property type="term" value="P:glucose homeostasis"/>
    <property type="evidence" value="ECO:0000266"/>
    <property type="project" value="RGD"/>
</dbReference>
<dbReference type="GO" id="GO:0005980">
    <property type="term" value="P:glycogen catabolic process"/>
    <property type="evidence" value="ECO:0000266"/>
    <property type="project" value="RGD"/>
</dbReference>
<dbReference type="GO" id="GO:0007626">
    <property type="term" value="P:locomotory behavior"/>
    <property type="evidence" value="ECO:0000266"/>
    <property type="project" value="RGD"/>
</dbReference>
<dbReference type="GO" id="GO:0045818">
    <property type="term" value="P:negative regulation of glycogen catabolic process"/>
    <property type="evidence" value="ECO:0000266"/>
    <property type="project" value="RGD"/>
</dbReference>
<dbReference type="GO" id="GO:0035024">
    <property type="term" value="P:negative regulation of Rho protein signal transduction"/>
    <property type="evidence" value="ECO:0000315"/>
    <property type="project" value="MGI"/>
</dbReference>
<dbReference type="GO" id="GO:0150099">
    <property type="term" value="P:neuron-glial cell signaling"/>
    <property type="evidence" value="ECO:0000266"/>
    <property type="project" value="RGD"/>
</dbReference>
<dbReference type="GO" id="GO:0035265">
    <property type="term" value="P:organ growth"/>
    <property type="evidence" value="ECO:0000266"/>
    <property type="project" value="RGD"/>
</dbReference>
<dbReference type="GO" id="GO:0007200">
    <property type="term" value="P:phospholipase C-activating G protein-coupled receptor signaling pathway"/>
    <property type="evidence" value="ECO:0000318"/>
    <property type="project" value="GO_Central"/>
</dbReference>
<dbReference type="GO" id="GO:0007204">
    <property type="term" value="P:positive regulation of cytosolic calcium ion concentration"/>
    <property type="evidence" value="ECO:0000314"/>
    <property type="project" value="RGD"/>
</dbReference>
<dbReference type="GO" id="GO:0045819">
    <property type="term" value="P:positive regulation of glycogen catabolic process"/>
    <property type="evidence" value="ECO:0000266"/>
    <property type="project" value="RGD"/>
</dbReference>
<dbReference type="GO" id="GO:0001996">
    <property type="term" value="P:positive regulation of heart rate by epinephrine-norepinephrine"/>
    <property type="evidence" value="ECO:0000266"/>
    <property type="project" value="RGD"/>
</dbReference>
<dbReference type="GO" id="GO:0043410">
    <property type="term" value="P:positive regulation of MAPK cascade"/>
    <property type="evidence" value="ECO:0000250"/>
    <property type="project" value="UniProtKB"/>
</dbReference>
<dbReference type="GO" id="GO:0001997">
    <property type="term" value="P:positive regulation of the force of heart contraction by epinephrine-norepinephrine"/>
    <property type="evidence" value="ECO:0000266"/>
    <property type="project" value="RGD"/>
</dbReference>
<dbReference type="GO" id="GO:0008217">
    <property type="term" value="P:regulation of blood pressure"/>
    <property type="evidence" value="ECO:0000266"/>
    <property type="project" value="RGD"/>
</dbReference>
<dbReference type="GO" id="GO:0055117">
    <property type="term" value="P:regulation of cardiac muscle contraction"/>
    <property type="evidence" value="ECO:0007669"/>
    <property type="project" value="InterPro"/>
</dbReference>
<dbReference type="GO" id="GO:0019229">
    <property type="term" value="P:regulation of vasoconstriction"/>
    <property type="evidence" value="ECO:0007669"/>
    <property type="project" value="InterPro"/>
</dbReference>
<dbReference type="GO" id="GO:0001975">
    <property type="term" value="P:response to amphetamine"/>
    <property type="evidence" value="ECO:0000266"/>
    <property type="project" value="RGD"/>
</dbReference>
<dbReference type="GO" id="GO:0043627">
    <property type="term" value="P:response to estrogen"/>
    <property type="evidence" value="ECO:0000270"/>
    <property type="project" value="RGD"/>
</dbReference>
<dbReference type="GO" id="GO:0009725">
    <property type="term" value="P:response to hormone"/>
    <property type="evidence" value="ECO:0000315"/>
    <property type="project" value="RGD"/>
</dbReference>
<dbReference type="GO" id="GO:0043278">
    <property type="term" value="P:response to morphine"/>
    <property type="evidence" value="ECO:0000266"/>
    <property type="project" value="RGD"/>
</dbReference>
<dbReference type="GO" id="GO:0048545">
    <property type="term" value="P:response to steroid hormone"/>
    <property type="evidence" value="ECO:0000315"/>
    <property type="project" value="RGD"/>
</dbReference>
<dbReference type="GO" id="GO:0009410">
    <property type="term" value="P:response to xenobiotic stimulus"/>
    <property type="evidence" value="ECO:0000270"/>
    <property type="project" value="RGD"/>
</dbReference>
<dbReference type="GO" id="GO:0001987">
    <property type="term" value="P:vasoconstriction of artery involved in baroreceptor response to lowering of systemic arterial blood pressure"/>
    <property type="evidence" value="ECO:0000266"/>
    <property type="project" value="RGD"/>
</dbReference>
<dbReference type="GO" id="GO:0008542">
    <property type="term" value="P:visual learning"/>
    <property type="evidence" value="ECO:0000266"/>
    <property type="project" value="RGD"/>
</dbReference>
<dbReference type="CDD" id="cd15326">
    <property type="entry name" value="7tmA_alpha1B_AR"/>
    <property type="match status" value="1"/>
</dbReference>
<dbReference type="FunFam" id="1.20.1070.10:FF:000027">
    <property type="entry name" value="alpha-1A adrenergic receptor"/>
    <property type="match status" value="1"/>
</dbReference>
<dbReference type="Gene3D" id="1.20.1070.10">
    <property type="entry name" value="Rhodopsin 7-helix transmembrane proteins"/>
    <property type="match status" value="1"/>
</dbReference>
<dbReference type="InterPro" id="IPR002233">
    <property type="entry name" value="ADR_fam"/>
</dbReference>
<dbReference type="InterPro" id="IPR001115">
    <property type="entry name" value="ADRA1B_rcpt"/>
</dbReference>
<dbReference type="InterPro" id="IPR000276">
    <property type="entry name" value="GPCR_Rhodpsn"/>
</dbReference>
<dbReference type="InterPro" id="IPR017452">
    <property type="entry name" value="GPCR_Rhodpsn_7TM"/>
</dbReference>
<dbReference type="PANTHER" id="PTHR24248">
    <property type="entry name" value="ADRENERGIC RECEPTOR-RELATED G-PROTEIN COUPLED RECEPTOR"/>
    <property type="match status" value="1"/>
</dbReference>
<dbReference type="PANTHER" id="PTHR24248:SF17">
    <property type="entry name" value="ALPHA-1B ADRENERGIC RECEPTOR"/>
    <property type="match status" value="1"/>
</dbReference>
<dbReference type="Pfam" id="PF00001">
    <property type="entry name" value="7tm_1"/>
    <property type="match status" value="1"/>
</dbReference>
<dbReference type="PRINTS" id="PR01103">
    <property type="entry name" value="ADRENERGICR"/>
</dbReference>
<dbReference type="PRINTS" id="PR00556">
    <property type="entry name" value="ADRENRGCA1BR"/>
</dbReference>
<dbReference type="PRINTS" id="PR00237">
    <property type="entry name" value="GPCRRHODOPSN"/>
</dbReference>
<dbReference type="SMART" id="SM01381">
    <property type="entry name" value="7TM_GPCR_Srsx"/>
    <property type="match status" value="1"/>
</dbReference>
<dbReference type="SUPFAM" id="SSF81321">
    <property type="entry name" value="Family A G protein-coupled receptor-like"/>
    <property type="match status" value="1"/>
</dbReference>
<dbReference type="PROSITE" id="PS00237">
    <property type="entry name" value="G_PROTEIN_RECEP_F1_1"/>
    <property type="match status" value="1"/>
</dbReference>
<dbReference type="PROSITE" id="PS50262">
    <property type="entry name" value="G_PROTEIN_RECEP_F1_2"/>
    <property type="match status" value="1"/>
</dbReference>
<evidence type="ECO:0000250" key="1"/>
<evidence type="ECO:0000250" key="2">
    <source>
        <dbReference type="UniProtKB" id="P35368"/>
    </source>
</evidence>
<evidence type="ECO:0000250" key="3">
    <source>
        <dbReference type="UniProtKB" id="P97717"/>
    </source>
</evidence>
<evidence type="ECO:0000255" key="4"/>
<evidence type="ECO:0000255" key="5">
    <source>
        <dbReference type="PROSITE-ProRule" id="PRU00521"/>
    </source>
</evidence>
<evidence type="ECO:0000256" key="6">
    <source>
        <dbReference type="SAM" id="MobiDB-lite"/>
    </source>
</evidence>
<evidence type="ECO:0000305" key="7"/>
<sequence>MNPDLDTGHNTSAPAHWGELKDDNFTGPNQTSSNSTLPQLDVTRAISVGLVLGAFILFAIVGNILVILSVACNRHLRTPTNYFIVNLAIADLLLSFTVLPFSATLEVLGYWVLGRIFCDIWAAVDVLCCTASILSLCAISIDRYIGVRYSLQYPTLVTRRKAILALLSVWVLSTVISIGPLLGWKEPAPNDDKECGVTEEPFYALFSSLGSFYIPLAVILVMYCRVYIVAKRTTKNLEAGVMKEMSNSKELTLRIHSKNFHEDTLSSTKAKGHNPRSSIAVKLFKFSREKKAAKTLGIVVGMFILCWLPFFIALPLGSLFSTLKPPDAVFKVVFWLGYFNSCLNPIIYPCSSKEFKRAFMRILGCQCRGGRRRRRRRRLGACAYTYRPWTRGGSLERSQSRKDSLDDSGSCMSGTQRTLPSASPSPGYLGRGTQPPVELCAFPEWKPGALLSLPEPPGRRGRLDSGPLFTFKLLGDPESPGTEGDTSNGGCDTTTDLANGQPGFKSNMPLAPGHF</sequence>
<reference key="1">
    <citation type="journal article" date="1990" name="Nucleic Acids Res.">
        <title>Sequence of a rat brain cDNA encoding an alpha-1B adrenergic receptor.</title>
        <authorList>
            <person name="Voigt M.M."/>
            <person name="Kispert J."/>
            <person name="Chin H."/>
        </authorList>
    </citation>
    <scope>NUCLEOTIDE SEQUENCE [MRNA]</scope>
    <source>
        <strain>Sprague-Dawley</strain>
        <tissue>Brain</tissue>
    </source>
</reference>
<reference key="2">
    <citation type="journal article" date="1991" name="J. Biol. Chem.">
        <title>Molecular cloning and expression of the cDNA for the alpha 1A-adrenergic receptor. The gene for which is located on human chromosome 5.</title>
        <authorList>
            <person name="Lomasney J.W."/>
            <person name="Cotecchia S."/>
            <person name="Lorenz W."/>
            <person name="Leung W.-Y."/>
            <person name="Schwinn D.A."/>
            <person name="Yang-Feng T.L."/>
            <person name="Brownstein M."/>
            <person name="Lefkowitz R.J."/>
            <person name="Caron M.G."/>
        </authorList>
    </citation>
    <scope>NUCLEOTIDE SEQUENCE [GENOMIC DNA]</scope>
</reference>
<reference key="3">
    <citation type="journal article" date="1993" name="Gene">
        <title>Isolation and characterization of the gene encoding the rat alpha 1B adrenergic receptor.</title>
        <authorList>
            <person name="Gao B."/>
            <person name="Kunos G."/>
        </authorList>
    </citation>
    <scope>NUCLEOTIDE SEQUENCE [GENOMIC DNA]</scope>
</reference>
<reference key="4">
    <citation type="journal article" date="1994" name="J. Clin. Invest.">
        <title>cAMP responsive element-mediated regulation of the gene transcription of the alpha 1B adrenergic receptor by thyrotropin.</title>
        <authorList>
            <person name="Kanasaki M."/>
            <person name="Matsubara H."/>
            <person name="Murasawa S."/>
            <person name="Masaki H."/>
            <person name="Nio Y."/>
            <person name="Inada M."/>
        </authorList>
    </citation>
    <scope>NUCLEOTIDE SEQUENCE [GENOMIC DNA] OF 1-253</scope>
</reference>